<gene>
    <name evidence="1" type="primary">mobA</name>
    <name type="ordered locus">NP_2138A</name>
</gene>
<dbReference type="EC" id="2.7.7.77" evidence="1"/>
<dbReference type="EMBL" id="CR936257">
    <property type="protein sequence ID" value="CAI49160.1"/>
    <property type="molecule type" value="Genomic_DNA"/>
</dbReference>
<dbReference type="RefSeq" id="WP_011322788.1">
    <property type="nucleotide sequence ID" value="NC_007426.1"/>
</dbReference>
<dbReference type="SMR" id="Q3IRT2"/>
<dbReference type="STRING" id="348780.NP_2138A"/>
<dbReference type="EnsemblBacteria" id="CAI49160">
    <property type="protein sequence ID" value="CAI49160"/>
    <property type="gene ID" value="NP_2138A"/>
</dbReference>
<dbReference type="GeneID" id="3702930"/>
<dbReference type="KEGG" id="nph:NP_2138A"/>
<dbReference type="eggNOG" id="arCOG01872">
    <property type="taxonomic scope" value="Archaea"/>
</dbReference>
<dbReference type="HOGENOM" id="CLU_055597_2_1_2"/>
<dbReference type="OrthoDB" id="28434at2157"/>
<dbReference type="Proteomes" id="UP000002698">
    <property type="component" value="Chromosome"/>
</dbReference>
<dbReference type="GO" id="GO:0005737">
    <property type="term" value="C:cytoplasm"/>
    <property type="evidence" value="ECO:0007669"/>
    <property type="project" value="UniProtKB-SubCell"/>
</dbReference>
<dbReference type="GO" id="GO:0005525">
    <property type="term" value="F:GTP binding"/>
    <property type="evidence" value="ECO:0007669"/>
    <property type="project" value="UniProtKB-UniRule"/>
</dbReference>
<dbReference type="GO" id="GO:0046872">
    <property type="term" value="F:metal ion binding"/>
    <property type="evidence" value="ECO:0007669"/>
    <property type="project" value="UniProtKB-KW"/>
</dbReference>
<dbReference type="GO" id="GO:0061603">
    <property type="term" value="F:molybdenum cofactor guanylyltransferase activity"/>
    <property type="evidence" value="ECO:0007669"/>
    <property type="project" value="UniProtKB-EC"/>
</dbReference>
<dbReference type="GO" id="GO:0006777">
    <property type="term" value="P:Mo-molybdopterin cofactor biosynthetic process"/>
    <property type="evidence" value="ECO:0007669"/>
    <property type="project" value="UniProtKB-KW"/>
</dbReference>
<dbReference type="CDD" id="cd02503">
    <property type="entry name" value="MobA"/>
    <property type="match status" value="1"/>
</dbReference>
<dbReference type="Gene3D" id="3.90.550.10">
    <property type="entry name" value="Spore Coat Polysaccharide Biosynthesis Protein SpsA, Chain A"/>
    <property type="match status" value="1"/>
</dbReference>
<dbReference type="HAMAP" id="MF_00316">
    <property type="entry name" value="MobA"/>
    <property type="match status" value="1"/>
</dbReference>
<dbReference type="InterPro" id="IPR025877">
    <property type="entry name" value="MobA-like_NTP_Trfase"/>
</dbReference>
<dbReference type="InterPro" id="IPR013482">
    <property type="entry name" value="Molybde_CF_guanTrfase"/>
</dbReference>
<dbReference type="InterPro" id="IPR029044">
    <property type="entry name" value="Nucleotide-diphossugar_trans"/>
</dbReference>
<dbReference type="PANTHER" id="PTHR19136">
    <property type="entry name" value="MOLYBDENUM COFACTOR GUANYLYLTRANSFERASE"/>
    <property type="match status" value="1"/>
</dbReference>
<dbReference type="PANTHER" id="PTHR19136:SF81">
    <property type="entry name" value="MOLYBDENUM COFACTOR GUANYLYLTRANSFERASE"/>
    <property type="match status" value="1"/>
</dbReference>
<dbReference type="Pfam" id="PF12804">
    <property type="entry name" value="NTP_transf_3"/>
    <property type="match status" value="1"/>
</dbReference>
<dbReference type="SUPFAM" id="SSF53448">
    <property type="entry name" value="Nucleotide-diphospho-sugar transferases"/>
    <property type="match status" value="1"/>
</dbReference>
<feature type="chain" id="PRO_1000019127" description="Probable molybdenum cofactor guanylyltransferase">
    <location>
        <begin position="1"/>
        <end position="202"/>
    </location>
</feature>
<feature type="binding site" evidence="1">
    <location>
        <begin position="9"/>
        <end position="11"/>
    </location>
    <ligand>
        <name>GTP</name>
        <dbReference type="ChEBI" id="CHEBI:37565"/>
    </ligand>
</feature>
<feature type="binding site" evidence="1">
    <location>
        <position position="22"/>
    </location>
    <ligand>
        <name>GTP</name>
        <dbReference type="ChEBI" id="CHEBI:37565"/>
    </ligand>
</feature>
<feature type="binding site" evidence="1">
    <location>
        <position position="50"/>
    </location>
    <ligand>
        <name>GTP</name>
        <dbReference type="ChEBI" id="CHEBI:37565"/>
    </ligand>
</feature>
<feature type="binding site" evidence="1">
    <location>
        <position position="77"/>
    </location>
    <ligand>
        <name>GTP</name>
        <dbReference type="ChEBI" id="CHEBI:37565"/>
    </ligand>
</feature>
<feature type="binding site" evidence="1">
    <location>
        <position position="102"/>
    </location>
    <ligand>
        <name>GTP</name>
        <dbReference type="ChEBI" id="CHEBI:37565"/>
    </ligand>
</feature>
<feature type="binding site" evidence="1">
    <location>
        <position position="102"/>
    </location>
    <ligand>
        <name>Mg(2+)</name>
        <dbReference type="ChEBI" id="CHEBI:18420"/>
    </ligand>
</feature>
<keyword id="KW-0963">Cytoplasm</keyword>
<keyword id="KW-0342">GTP-binding</keyword>
<keyword id="KW-0460">Magnesium</keyword>
<keyword id="KW-0479">Metal-binding</keyword>
<keyword id="KW-0501">Molybdenum cofactor biosynthesis</keyword>
<keyword id="KW-0547">Nucleotide-binding</keyword>
<keyword id="KW-1185">Reference proteome</keyword>
<keyword id="KW-0808">Transferase</keyword>
<evidence type="ECO:0000255" key="1">
    <source>
        <dbReference type="HAMAP-Rule" id="MF_00316"/>
    </source>
</evidence>
<proteinExistence type="inferred from homology"/>
<reference key="1">
    <citation type="journal article" date="2005" name="Genome Res.">
        <title>Living with two extremes: conclusions from the genome sequence of Natronomonas pharaonis.</title>
        <authorList>
            <person name="Falb M."/>
            <person name="Pfeiffer F."/>
            <person name="Palm P."/>
            <person name="Rodewald K."/>
            <person name="Hickmann V."/>
            <person name="Tittor J."/>
            <person name="Oesterhelt D."/>
        </authorList>
    </citation>
    <scope>NUCLEOTIDE SEQUENCE [LARGE SCALE GENOMIC DNA]</scope>
    <source>
        <strain>ATCC 35678 / DSM 2160 / CIP 103997 / JCM 8858 / NBRC 14720 / NCIMB 2260 / Gabara</strain>
    </source>
</reference>
<protein>
    <recommendedName>
        <fullName evidence="1">Probable molybdenum cofactor guanylyltransferase</fullName>
        <shortName evidence="1">MoCo guanylyltransferase</shortName>
        <ecNumber evidence="1">2.7.7.77</ecNumber>
    </recommendedName>
    <alternativeName>
        <fullName evidence="1">GTP:molybdopterin guanylyltransferase</fullName>
    </alternativeName>
    <alternativeName>
        <fullName evidence="1">Mo-MPT guanylyltransferase</fullName>
    </alternativeName>
    <alternativeName>
        <fullName evidence="1">Molybdopterin guanylyltransferase</fullName>
    </alternativeName>
    <alternativeName>
        <fullName evidence="1">Molybdopterin-guanine dinucleotide synthase</fullName>
        <shortName evidence="1">MGD synthase</shortName>
    </alternativeName>
</protein>
<accession>Q3IRT2</accession>
<organism>
    <name type="scientific">Natronomonas pharaonis (strain ATCC 35678 / DSM 2160 / CIP 103997 / JCM 8858 / NBRC 14720 / NCIMB 2260 / Gabara)</name>
    <name type="common">Halobacterium pharaonis</name>
    <dbReference type="NCBI Taxonomy" id="348780"/>
    <lineage>
        <taxon>Archaea</taxon>
        <taxon>Methanobacteriati</taxon>
        <taxon>Methanobacteriota</taxon>
        <taxon>Stenosarchaea group</taxon>
        <taxon>Halobacteria</taxon>
        <taxon>Halobacteriales</taxon>
        <taxon>Haloarculaceae</taxon>
        <taxon>Natronomonas</taxon>
    </lineage>
</organism>
<name>MOBA_NATPD</name>
<comment type="function">
    <text evidence="1">Transfers a GMP moiety from GTP to Mo-molybdopterin (Mo-MPT) cofactor (Moco or molybdenum cofactor) to form Mo-molybdopterin guanine dinucleotide (Mo-MGD) cofactor.</text>
</comment>
<comment type="catalytic activity">
    <reaction evidence="1">
        <text>Mo-molybdopterin + GTP + H(+) = Mo-molybdopterin guanine dinucleotide + diphosphate</text>
        <dbReference type="Rhea" id="RHEA:34243"/>
        <dbReference type="ChEBI" id="CHEBI:15378"/>
        <dbReference type="ChEBI" id="CHEBI:33019"/>
        <dbReference type="ChEBI" id="CHEBI:37565"/>
        <dbReference type="ChEBI" id="CHEBI:71302"/>
        <dbReference type="ChEBI" id="CHEBI:71310"/>
        <dbReference type="EC" id="2.7.7.77"/>
    </reaction>
</comment>
<comment type="cofactor">
    <cofactor evidence="1">
        <name>Mg(2+)</name>
        <dbReference type="ChEBI" id="CHEBI:18420"/>
    </cofactor>
</comment>
<comment type="subcellular location">
    <subcellularLocation>
        <location evidence="1">Cytoplasm</location>
    </subcellularLocation>
</comment>
<comment type="domain">
    <text evidence="1">The N-terminal domain determines nucleotide recognition and specific binding, while the C-terminal domain determines the specific binding to the target protein.</text>
</comment>
<comment type="similarity">
    <text evidence="1">Belongs to the MobA family.</text>
</comment>
<sequence>MGERTGVIVAGGQSTRMGDVDKTVVDVAGVPLVRRVANRLLAVVDHLVVNCRRDQQERLAAALEGLSPTFAVDEVPDRGPTAGIMTGLSTVETPYAAVVAADMPYLDPELLEYLFERADSHDAAVPRPEEWFEPLHAVYRPEPMAEACAEALEAADARIITPLSSLDHIVIERDAIVEHGSLRSFESVDTPEDLERARERLS</sequence>